<protein>
    <recommendedName>
        <fullName evidence="1">Triosephosphate isomerase</fullName>
        <shortName evidence="1">TIM</shortName>
        <shortName evidence="1">TPI</shortName>
        <ecNumber evidence="1">5.3.1.1</ecNumber>
    </recommendedName>
    <alternativeName>
        <fullName evidence="1">Triose-phosphate isomerase</fullName>
    </alternativeName>
</protein>
<name>TPIS_BRASO</name>
<organism>
    <name type="scientific">Bradyrhizobium sp. (strain ORS 278)</name>
    <dbReference type="NCBI Taxonomy" id="114615"/>
    <lineage>
        <taxon>Bacteria</taxon>
        <taxon>Pseudomonadati</taxon>
        <taxon>Pseudomonadota</taxon>
        <taxon>Alphaproteobacteria</taxon>
        <taxon>Hyphomicrobiales</taxon>
        <taxon>Nitrobacteraceae</taxon>
        <taxon>Bradyrhizobium</taxon>
    </lineage>
</organism>
<accession>A4YVD3</accession>
<sequence length="251" mass="25959">MTDRIRPLIAGNWKMNGLKASAAEFEAMLAGAAEVTGKADLLVCPPATLLAAFAEKTRGGKAVAVGAQDCHAKASGAHTGDISAEMLADAGASAVIVGHSERRADHGESDVVVHQKAEAAWRAGLVAIVCVGETQQQRDAGLTLEILRGQLTLSLPEGSRADNLIVAYEPVWAIGTGLTPTAGDVEQIHSFIRQLLIVRFKEQGARMRILYGGSVKPSNAAELMAVANVNGALVGGASLKAADFLAIAKGC</sequence>
<gene>
    <name evidence="1" type="primary">tpiA</name>
    <name type="ordered locus">BRADO4107</name>
</gene>
<reference key="1">
    <citation type="journal article" date="2007" name="Science">
        <title>Legumes symbioses: absence of nod genes in photosynthetic bradyrhizobia.</title>
        <authorList>
            <person name="Giraud E."/>
            <person name="Moulin L."/>
            <person name="Vallenet D."/>
            <person name="Barbe V."/>
            <person name="Cytryn E."/>
            <person name="Avarre J.-C."/>
            <person name="Jaubert M."/>
            <person name="Simon D."/>
            <person name="Cartieaux F."/>
            <person name="Prin Y."/>
            <person name="Bena G."/>
            <person name="Hannibal L."/>
            <person name="Fardoux J."/>
            <person name="Kojadinovic M."/>
            <person name="Vuillet L."/>
            <person name="Lajus A."/>
            <person name="Cruveiller S."/>
            <person name="Rouy Z."/>
            <person name="Mangenot S."/>
            <person name="Segurens B."/>
            <person name="Dossat C."/>
            <person name="Franck W.L."/>
            <person name="Chang W.-S."/>
            <person name="Saunders E."/>
            <person name="Bruce D."/>
            <person name="Richardson P."/>
            <person name="Normand P."/>
            <person name="Dreyfus B."/>
            <person name="Pignol D."/>
            <person name="Stacey G."/>
            <person name="Emerich D."/>
            <person name="Vermeglio A."/>
            <person name="Medigue C."/>
            <person name="Sadowsky M."/>
        </authorList>
    </citation>
    <scope>NUCLEOTIDE SEQUENCE [LARGE SCALE GENOMIC DNA]</scope>
    <source>
        <strain>ORS 278</strain>
    </source>
</reference>
<proteinExistence type="inferred from homology"/>
<evidence type="ECO:0000255" key="1">
    <source>
        <dbReference type="HAMAP-Rule" id="MF_00147"/>
    </source>
</evidence>
<dbReference type="EC" id="5.3.1.1" evidence="1"/>
<dbReference type="EMBL" id="CU234118">
    <property type="protein sequence ID" value="CAL77859.1"/>
    <property type="molecule type" value="Genomic_DNA"/>
</dbReference>
<dbReference type="RefSeq" id="WP_011926989.1">
    <property type="nucleotide sequence ID" value="NC_009445.1"/>
</dbReference>
<dbReference type="SMR" id="A4YVD3"/>
<dbReference type="STRING" id="114615.BRADO4107"/>
<dbReference type="KEGG" id="bra:BRADO4107"/>
<dbReference type="eggNOG" id="COG0149">
    <property type="taxonomic scope" value="Bacteria"/>
</dbReference>
<dbReference type="HOGENOM" id="CLU_024251_2_1_5"/>
<dbReference type="OrthoDB" id="9809429at2"/>
<dbReference type="UniPathway" id="UPA00109">
    <property type="reaction ID" value="UER00189"/>
</dbReference>
<dbReference type="UniPathway" id="UPA00138"/>
<dbReference type="Proteomes" id="UP000001994">
    <property type="component" value="Chromosome"/>
</dbReference>
<dbReference type="GO" id="GO:0005829">
    <property type="term" value="C:cytosol"/>
    <property type="evidence" value="ECO:0007669"/>
    <property type="project" value="TreeGrafter"/>
</dbReference>
<dbReference type="GO" id="GO:0004807">
    <property type="term" value="F:triose-phosphate isomerase activity"/>
    <property type="evidence" value="ECO:0007669"/>
    <property type="project" value="UniProtKB-UniRule"/>
</dbReference>
<dbReference type="GO" id="GO:0006094">
    <property type="term" value="P:gluconeogenesis"/>
    <property type="evidence" value="ECO:0007669"/>
    <property type="project" value="UniProtKB-UniRule"/>
</dbReference>
<dbReference type="GO" id="GO:0046166">
    <property type="term" value="P:glyceraldehyde-3-phosphate biosynthetic process"/>
    <property type="evidence" value="ECO:0007669"/>
    <property type="project" value="TreeGrafter"/>
</dbReference>
<dbReference type="GO" id="GO:0019563">
    <property type="term" value="P:glycerol catabolic process"/>
    <property type="evidence" value="ECO:0007669"/>
    <property type="project" value="TreeGrafter"/>
</dbReference>
<dbReference type="GO" id="GO:0006096">
    <property type="term" value="P:glycolytic process"/>
    <property type="evidence" value="ECO:0007669"/>
    <property type="project" value="UniProtKB-UniRule"/>
</dbReference>
<dbReference type="CDD" id="cd00311">
    <property type="entry name" value="TIM"/>
    <property type="match status" value="1"/>
</dbReference>
<dbReference type="FunFam" id="3.20.20.70:FF:000016">
    <property type="entry name" value="Triosephosphate isomerase"/>
    <property type="match status" value="1"/>
</dbReference>
<dbReference type="Gene3D" id="3.20.20.70">
    <property type="entry name" value="Aldolase class I"/>
    <property type="match status" value="1"/>
</dbReference>
<dbReference type="HAMAP" id="MF_00147_B">
    <property type="entry name" value="TIM_B"/>
    <property type="match status" value="1"/>
</dbReference>
<dbReference type="InterPro" id="IPR013785">
    <property type="entry name" value="Aldolase_TIM"/>
</dbReference>
<dbReference type="InterPro" id="IPR035990">
    <property type="entry name" value="TIM_sf"/>
</dbReference>
<dbReference type="InterPro" id="IPR022896">
    <property type="entry name" value="TrioseP_Isoase_bac/euk"/>
</dbReference>
<dbReference type="InterPro" id="IPR000652">
    <property type="entry name" value="Triosephosphate_isomerase"/>
</dbReference>
<dbReference type="InterPro" id="IPR020861">
    <property type="entry name" value="Triosephosphate_isomerase_AS"/>
</dbReference>
<dbReference type="NCBIfam" id="TIGR00419">
    <property type="entry name" value="tim"/>
    <property type="match status" value="1"/>
</dbReference>
<dbReference type="PANTHER" id="PTHR21139">
    <property type="entry name" value="TRIOSEPHOSPHATE ISOMERASE"/>
    <property type="match status" value="1"/>
</dbReference>
<dbReference type="PANTHER" id="PTHR21139:SF42">
    <property type="entry name" value="TRIOSEPHOSPHATE ISOMERASE"/>
    <property type="match status" value="1"/>
</dbReference>
<dbReference type="Pfam" id="PF00121">
    <property type="entry name" value="TIM"/>
    <property type="match status" value="1"/>
</dbReference>
<dbReference type="SUPFAM" id="SSF51351">
    <property type="entry name" value="Triosephosphate isomerase (TIM)"/>
    <property type="match status" value="1"/>
</dbReference>
<dbReference type="PROSITE" id="PS00171">
    <property type="entry name" value="TIM_1"/>
    <property type="match status" value="1"/>
</dbReference>
<dbReference type="PROSITE" id="PS51440">
    <property type="entry name" value="TIM_2"/>
    <property type="match status" value="1"/>
</dbReference>
<keyword id="KW-0963">Cytoplasm</keyword>
<keyword id="KW-0312">Gluconeogenesis</keyword>
<keyword id="KW-0324">Glycolysis</keyword>
<keyword id="KW-0413">Isomerase</keyword>
<keyword id="KW-1185">Reference proteome</keyword>
<feature type="chain" id="PRO_0000307441" description="Triosephosphate isomerase">
    <location>
        <begin position="1"/>
        <end position="251"/>
    </location>
</feature>
<feature type="active site" description="Electrophile" evidence="1">
    <location>
        <position position="99"/>
    </location>
</feature>
<feature type="active site" description="Proton acceptor" evidence="1">
    <location>
        <position position="169"/>
    </location>
</feature>
<feature type="binding site" evidence="1">
    <location>
        <begin position="12"/>
        <end position="14"/>
    </location>
    <ligand>
        <name>substrate</name>
    </ligand>
</feature>
<feature type="binding site" evidence="1">
    <location>
        <position position="175"/>
    </location>
    <ligand>
        <name>substrate</name>
    </ligand>
</feature>
<feature type="binding site" evidence="1">
    <location>
        <position position="214"/>
    </location>
    <ligand>
        <name>substrate</name>
    </ligand>
</feature>
<feature type="binding site" evidence="1">
    <location>
        <begin position="235"/>
        <end position="236"/>
    </location>
    <ligand>
        <name>substrate</name>
    </ligand>
</feature>
<comment type="function">
    <text evidence="1">Involved in the gluconeogenesis. Catalyzes stereospecifically the conversion of dihydroxyacetone phosphate (DHAP) to D-glyceraldehyde-3-phosphate (G3P).</text>
</comment>
<comment type="catalytic activity">
    <reaction evidence="1">
        <text>D-glyceraldehyde 3-phosphate = dihydroxyacetone phosphate</text>
        <dbReference type="Rhea" id="RHEA:18585"/>
        <dbReference type="ChEBI" id="CHEBI:57642"/>
        <dbReference type="ChEBI" id="CHEBI:59776"/>
        <dbReference type="EC" id="5.3.1.1"/>
    </reaction>
</comment>
<comment type="pathway">
    <text evidence="1">Carbohydrate biosynthesis; gluconeogenesis.</text>
</comment>
<comment type="pathway">
    <text evidence="1">Carbohydrate degradation; glycolysis; D-glyceraldehyde 3-phosphate from glycerone phosphate: step 1/1.</text>
</comment>
<comment type="subunit">
    <text evidence="1">Homodimer.</text>
</comment>
<comment type="subcellular location">
    <subcellularLocation>
        <location evidence="1">Cytoplasm</location>
    </subcellularLocation>
</comment>
<comment type="similarity">
    <text evidence="1">Belongs to the triosephosphate isomerase family.</text>
</comment>